<gene>
    <name evidence="1" type="primary">grcA</name>
    <name type="ordered locus">ECUMN_2904</name>
</gene>
<accession>B7N6H0</accession>
<feature type="chain" id="PRO_1000133986" description="Autonomous glycyl radical cofactor">
    <location>
        <begin position="1"/>
        <end position="127"/>
    </location>
</feature>
<feature type="domain" description="Glycine radical" evidence="1">
    <location>
        <begin position="5"/>
        <end position="127"/>
    </location>
</feature>
<feature type="modified residue" description="N6-acetyllysine" evidence="1">
    <location>
        <position position="48"/>
    </location>
</feature>
<feature type="modified residue" description="N6-acetyllysine" evidence="1">
    <location>
        <position position="88"/>
    </location>
</feature>
<feature type="modified residue" description="N6-acetyllysine" evidence="1">
    <location>
        <position position="92"/>
    </location>
</feature>
<feature type="modified residue" description="Glycine radical" evidence="1">
    <location>
        <position position="102"/>
    </location>
</feature>
<evidence type="ECO:0000255" key="1">
    <source>
        <dbReference type="HAMAP-Rule" id="MF_00806"/>
    </source>
</evidence>
<protein>
    <recommendedName>
        <fullName evidence="1">Autonomous glycyl radical cofactor</fullName>
    </recommendedName>
</protein>
<proteinExistence type="inferred from homology"/>
<dbReference type="EMBL" id="CU928163">
    <property type="protein sequence ID" value="CAR14079.1"/>
    <property type="molecule type" value="Genomic_DNA"/>
</dbReference>
<dbReference type="RefSeq" id="WP_000627804.1">
    <property type="nucleotide sequence ID" value="NC_011751.1"/>
</dbReference>
<dbReference type="RefSeq" id="YP_002413603.1">
    <property type="nucleotide sequence ID" value="NC_011751.1"/>
</dbReference>
<dbReference type="SMR" id="B7N6H0"/>
<dbReference type="STRING" id="585056.ECUMN_2904"/>
<dbReference type="GeneID" id="89517377"/>
<dbReference type="KEGG" id="eum:ECUMN_2904"/>
<dbReference type="PATRIC" id="fig|585056.7.peg.3091"/>
<dbReference type="HOGENOM" id="CLU_133780_0_0_6"/>
<dbReference type="Proteomes" id="UP000007097">
    <property type="component" value="Chromosome"/>
</dbReference>
<dbReference type="GO" id="GO:0005829">
    <property type="term" value="C:cytosol"/>
    <property type="evidence" value="ECO:0007669"/>
    <property type="project" value="TreeGrafter"/>
</dbReference>
<dbReference type="GO" id="GO:0008861">
    <property type="term" value="F:formate C-acetyltransferase activity"/>
    <property type="evidence" value="ECO:0007669"/>
    <property type="project" value="TreeGrafter"/>
</dbReference>
<dbReference type="FunFam" id="3.20.70.20:FF:000002">
    <property type="entry name" value="Autonomous glycyl radical cofactor"/>
    <property type="match status" value="1"/>
</dbReference>
<dbReference type="Gene3D" id="3.20.70.20">
    <property type="match status" value="1"/>
</dbReference>
<dbReference type="HAMAP" id="MF_00806">
    <property type="entry name" value="GrcA"/>
    <property type="match status" value="1"/>
</dbReference>
<dbReference type="InterPro" id="IPR050244">
    <property type="entry name" value="Auton_GlycylRad_Cofactor"/>
</dbReference>
<dbReference type="InterPro" id="IPR019777">
    <property type="entry name" value="Form_AcTrfase_GR_CS"/>
</dbReference>
<dbReference type="InterPro" id="IPR001150">
    <property type="entry name" value="Gly_radical"/>
</dbReference>
<dbReference type="InterPro" id="IPR011140">
    <property type="entry name" value="Glycyl_radical_cofactor_GrcA"/>
</dbReference>
<dbReference type="NCBIfam" id="TIGR04365">
    <property type="entry name" value="spare_glycyl"/>
    <property type="match status" value="1"/>
</dbReference>
<dbReference type="PANTHER" id="PTHR30191">
    <property type="entry name" value="FORMATE ACETYLTRANSFERASE"/>
    <property type="match status" value="1"/>
</dbReference>
<dbReference type="PANTHER" id="PTHR30191:SF0">
    <property type="entry name" value="FORMATE ACETYLTRANSFERASE 1"/>
    <property type="match status" value="1"/>
</dbReference>
<dbReference type="Pfam" id="PF01228">
    <property type="entry name" value="Gly_radical"/>
    <property type="match status" value="1"/>
</dbReference>
<dbReference type="PIRSF" id="PIRSF000378">
    <property type="entry name" value="Gly_radicl_yfiD"/>
    <property type="match status" value="1"/>
</dbReference>
<dbReference type="SUPFAM" id="SSF51998">
    <property type="entry name" value="PFL-like glycyl radical enzymes"/>
    <property type="match status" value="1"/>
</dbReference>
<dbReference type="PROSITE" id="PS00850">
    <property type="entry name" value="GLY_RADICAL_1"/>
    <property type="match status" value="1"/>
</dbReference>
<dbReference type="PROSITE" id="PS51149">
    <property type="entry name" value="GLY_RADICAL_2"/>
    <property type="match status" value="1"/>
</dbReference>
<comment type="function">
    <text evidence="1">Acts as a radical domain for damaged PFL and possibly other radical proteins.</text>
</comment>
<sequence>MITGIQITKAANDDLLNSFWLLDSEKGEARCIVAKAGFAEDEVVAVSKLGDIEYREVPVEVKPEVRVEGGQHLNVNVLRRETLEDAVKHPEKYPQLTIRVSGYAVRFNSLTPEQQRDVIARTFTESL</sequence>
<organism>
    <name type="scientific">Escherichia coli O17:K52:H18 (strain UMN026 / ExPEC)</name>
    <dbReference type="NCBI Taxonomy" id="585056"/>
    <lineage>
        <taxon>Bacteria</taxon>
        <taxon>Pseudomonadati</taxon>
        <taxon>Pseudomonadota</taxon>
        <taxon>Gammaproteobacteria</taxon>
        <taxon>Enterobacterales</taxon>
        <taxon>Enterobacteriaceae</taxon>
        <taxon>Escherichia</taxon>
    </lineage>
</organism>
<reference key="1">
    <citation type="journal article" date="2009" name="PLoS Genet.">
        <title>Organised genome dynamics in the Escherichia coli species results in highly diverse adaptive paths.</title>
        <authorList>
            <person name="Touchon M."/>
            <person name="Hoede C."/>
            <person name="Tenaillon O."/>
            <person name="Barbe V."/>
            <person name="Baeriswyl S."/>
            <person name="Bidet P."/>
            <person name="Bingen E."/>
            <person name="Bonacorsi S."/>
            <person name="Bouchier C."/>
            <person name="Bouvet O."/>
            <person name="Calteau A."/>
            <person name="Chiapello H."/>
            <person name="Clermont O."/>
            <person name="Cruveiller S."/>
            <person name="Danchin A."/>
            <person name="Diard M."/>
            <person name="Dossat C."/>
            <person name="Karoui M.E."/>
            <person name="Frapy E."/>
            <person name="Garry L."/>
            <person name="Ghigo J.M."/>
            <person name="Gilles A.M."/>
            <person name="Johnson J."/>
            <person name="Le Bouguenec C."/>
            <person name="Lescat M."/>
            <person name="Mangenot S."/>
            <person name="Martinez-Jehanne V."/>
            <person name="Matic I."/>
            <person name="Nassif X."/>
            <person name="Oztas S."/>
            <person name="Petit M.A."/>
            <person name="Pichon C."/>
            <person name="Rouy Z."/>
            <person name="Ruf C.S."/>
            <person name="Schneider D."/>
            <person name="Tourret J."/>
            <person name="Vacherie B."/>
            <person name="Vallenet D."/>
            <person name="Medigue C."/>
            <person name="Rocha E.P.C."/>
            <person name="Denamur E."/>
        </authorList>
    </citation>
    <scope>NUCLEOTIDE SEQUENCE [LARGE SCALE GENOMIC DNA]</scope>
    <source>
        <strain>UMN026 / ExPEC</strain>
    </source>
</reference>
<name>GRCA_ECOLU</name>
<keyword id="KW-0007">Acetylation</keyword>
<keyword id="KW-0556">Organic radical</keyword>